<accession>Q5R5X0</accession>
<evidence type="ECO:0000250" key="1"/>
<evidence type="ECO:0000250" key="2">
    <source>
        <dbReference type="UniProtKB" id="O35691"/>
    </source>
</evidence>
<evidence type="ECO:0000250" key="3">
    <source>
        <dbReference type="UniProtKB" id="Q9H307"/>
    </source>
</evidence>
<evidence type="ECO:0000255" key="4"/>
<evidence type="ECO:0000256" key="5">
    <source>
        <dbReference type="SAM" id="MobiDB-lite"/>
    </source>
</evidence>
<evidence type="ECO:0000305" key="6"/>
<proteinExistence type="evidence at transcript level"/>
<sequence>MAVAVRTLQEQLEKAKESLKNVDENIRKLTGRDPNDVRPIQARLLALSGPGGGRGRGSLLLRRGFSDSGGGPPAKQRDLEGAVSRLGGERRTRRESRQESDPEDDDVKKPALQSSVVATSKERTRRDLIQDQNMDEKGKQRNRRIFGLLMGTLQKFKQESTVATERQKRRQEIEQKLEVQAEEERKQVENERRELFEERRAKQTELRLLEQKVELAQLQEEWNEHNAKIIKYIRTKTKPHLFYIPGRMCPATQKLIEESQRKMNALFEGRRIEFAEQINKMEARPRRQSMKEKEHQVVRNEEQKAEQEEGKVAQREEELEETGNQHNDVEIEEAGEEEEKEIAIVHSDAEKEQEEEEQKQEIEVKMEEETEVRESEKQQDSQPEEVMDVLEMVENVKHVIADQEVMETNRVESVEPSENEASKELEPEMEFEIEPDNECKSLSPGKENVSALDMEKESEEKEEKESEPQPEPVAQPQPQPQHQPQLQLQSQSQPVLQSQPPSQPENLSLAVLQPTPQVTQEQGHLLPERKEFPVESVKLTEVPVEPVLTVHPESKSKTKTRSRSRGRARNKTSKSRSRSSSSSSSSSSSTSSSSGSSSSSGSSSSRSSSSSSSSTSGSSSRDSSSSTSSSSESRSRSRGRGHNRDRKHRRSVDRKRGDTSGLERSHKSSKGGSSRDTKGSKDKNSRSDRKRSISESSRSGKRSSRSERDRKSDRKDKRR</sequence>
<comment type="function">
    <text evidence="1">Transcriptional activator binding to the E-box 1 core sequence of the E-cadherin promoter gene; the core-binding sequence is 5'CAGGTG-3'. Capable of reversing CTBP1-mediated transcription repression. Auxiliary component of the splicing-dependent multiprotein exon junction complex (EJC) deposited at splice junction on mRNAs. The EJC is a dynamic structure consisting of core proteins and several peripheral nuclear and cytoplasmic associated factors that join the complex only transiently either during EJC assembly or during subsequent mRNA metabolism. Participates in the regulation of alternative pre-mRNA splicing. Associates to spliced mRNA within 60 nt upstream of the 5'-splice sites. Component of the PSAP complex which binds RNA in a sequence-independent manner and is proposed to be recruited to the EJC prior to or during the splicing process and to regulate specific excision of introns in specific transcription subsets. Involved in the establishment and maintenance of epithelia cell-cell adhesion (By similarity).</text>
</comment>
<comment type="subunit">
    <text evidence="1">Found in a mRNA splicing-dependent exon junction complex (EJC). Found in a complex with SR proteins. Found in a mRNP complex with RNPS1. Component of the PSAP complex consisting of RNPS1, SAP18 and PNN. Interacts with PNISR, CTBP1, CTBP2, KRT8, KRT18, KRT19, PS1D/PNO40, PPIG, RNPS1, SFRS4 and SRRM2. Identified in the spliceosome C complex (By similarity).</text>
</comment>
<comment type="subcellular location">
    <subcellularLocation>
        <location evidence="1">Nucleus speckle</location>
    </subcellularLocation>
    <subcellularLocation>
        <location evidence="1">Cell junction</location>
        <location evidence="1">Desmosome</location>
    </subcellularLocation>
    <text evidence="1">Cell-cell contact area, predominantly desmosome of intercellular adherens junction. Not a nucleocytoplasmic shuttling protein (By similarity).</text>
</comment>
<comment type="similarity">
    <text evidence="6">Belongs to the pinin family.</text>
</comment>
<feature type="initiator methionine" description="Removed" evidence="3">
    <location>
        <position position="1"/>
    </location>
</feature>
<feature type="chain" id="PRO_0000190244" description="Pinin">
    <location>
        <begin position="2"/>
        <end position="719"/>
    </location>
</feature>
<feature type="region of interest" description="Disordered" evidence="5">
    <location>
        <begin position="46"/>
        <end position="139"/>
    </location>
</feature>
<feature type="region of interest" description="Sufficient for PSAP complex assembly" evidence="1">
    <location>
        <begin position="221"/>
        <end position="284"/>
    </location>
</feature>
<feature type="region of interest" description="Disordered" evidence="5">
    <location>
        <begin position="280"/>
        <end position="719"/>
    </location>
</feature>
<feature type="coiled-coil region" evidence="4">
    <location>
        <begin position="2"/>
        <end position="32"/>
    </location>
</feature>
<feature type="coiled-coil region" evidence="4">
    <location>
        <begin position="163"/>
        <end position="234"/>
    </location>
</feature>
<feature type="coiled-coil region" evidence="4">
    <location>
        <begin position="287"/>
        <end position="379"/>
    </location>
</feature>
<feature type="coiled-coil region" evidence="4">
    <location>
        <begin position="446"/>
        <end position="467"/>
    </location>
</feature>
<feature type="compositionally biased region" description="Basic and acidic residues" evidence="5">
    <location>
        <begin position="87"/>
        <end position="100"/>
    </location>
</feature>
<feature type="compositionally biased region" description="Basic and acidic residues" evidence="5">
    <location>
        <begin position="120"/>
        <end position="139"/>
    </location>
</feature>
<feature type="compositionally biased region" description="Basic and acidic residues" evidence="5">
    <location>
        <begin position="280"/>
        <end position="316"/>
    </location>
</feature>
<feature type="compositionally biased region" description="Acidic residues" evidence="5">
    <location>
        <begin position="330"/>
        <end position="340"/>
    </location>
</feature>
<feature type="compositionally biased region" description="Basic and acidic residues" evidence="5">
    <location>
        <begin position="341"/>
        <end position="350"/>
    </location>
</feature>
<feature type="compositionally biased region" description="Basic and acidic residues" evidence="5">
    <location>
        <begin position="359"/>
        <end position="379"/>
    </location>
</feature>
<feature type="compositionally biased region" description="Basic and acidic residues" evidence="5">
    <location>
        <begin position="394"/>
        <end position="413"/>
    </location>
</feature>
<feature type="compositionally biased region" description="Acidic residues" evidence="5">
    <location>
        <begin position="427"/>
        <end position="436"/>
    </location>
</feature>
<feature type="compositionally biased region" description="Basic and acidic residues" evidence="5">
    <location>
        <begin position="453"/>
        <end position="467"/>
    </location>
</feature>
<feature type="compositionally biased region" description="Pro residues" evidence="5">
    <location>
        <begin position="469"/>
        <end position="481"/>
    </location>
</feature>
<feature type="compositionally biased region" description="Low complexity" evidence="5">
    <location>
        <begin position="482"/>
        <end position="500"/>
    </location>
</feature>
<feature type="compositionally biased region" description="Basic residues" evidence="5">
    <location>
        <begin position="557"/>
        <end position="577"/>
    </location>
</feature>
<feature type="compositionally biased region" description="Low complexity" evidence="5">
    <location>
        <begin position="578"/>
        <end position="632"/>
    </location>
</feature>
<feature type="compositionally biased region" description="Basic residues" evidence="5">
    <location>
        <begin position="636"/>
        <end position="653"/>
    </location>
</feature>
<feature type="compositionally biased region" description="Basic and acidic residues" evidence="5">
    <location>
        <begin position="654"/>
        <end position="666"/>
    </location>
</feature>
<feature type="compositionally biased region" description="Basic and acidic residues" evidence="5">
    <location>
        <begin position="673"/>
        <end position="693"/>
    </location>
</feature>
<feature type="compositionally biased region" description="Basic and acidic residues" evidence="5">
    <location>
        <begin position="704"/>
        <end position="719"/>
    </location>
</feature>
<feature type="modified residue" description="N-acetylalanine" evidence="3">
    <location>
        <position position="2"/>
    </location>
</feature>
<feature type="modified residue" description="Phosphoserine" evidence="3">
    <location>
        <position position="48"/>
    </location>
</feature>
<feature type="modified residue" description="Omega-N-methylarginine" evidence="2">
    <location>
        <position position="54"/>
    </location>
</feature>
<feature type="modified residue" description="Phosphoserine" evidence="3">
    <location>
        <position position="58"/>
    </location>
</feature>
<feature type="modified residue" description="Phosphoserine" evidence="3">
    <location>
        <position position="66"/>
    </location>
</feature>
<feature type="modified residue" description="Phosphoserine" evidence="3">
    <location>
        <position position="96"/>
    </location>
</feature>
<feature type="modified residue" description="Phosphoserine" evidence="3">
    <location>
        <position position="100"/>
    </location>
</feature>
<feature type="modified residue" description="Phosphoserine" evidence="3">
    <location>
        <position position="114"/>
    </location>
</feature>
<feature type="modified residue" description="Phosphoserine" evidence="3">
    <location>
        <position position="115"/>
    </location>
</feature>
<feature type="modified residue" description="Phosphothreonine" evidence="3">
    <location>
        <position position="124"/>
    </location>
</feature>
<feature type="modified residue" description="N6-acetyllysine; alternate" evidence="3">
    <location>
        <position position="238"/>
    </location>
</feature>
<feature type="modified residue" description="N6-succinyllysine; alternate" evidence="2">
    <location>
        <position position="238"/>
    </location>
</feature>
<feature type="modified residue" description="Phosphoserine" evidence="3">
    <location>
        <position position="347"/>
    </location>
</feature>
<feature type="modified residue" description="Phosphoserine" evidence="3">
    <location>
        <position position="375"/>
    </location>
</feature>
<feature type="modified residue" description="Phosphoserine" evidence="3">
    <location>
        <position position="381"/>
    </location>
</feature>
<feature type="modified residue" description="Phosphoserine" evidence="2">
    <location>
        <position position="443"/>
    </location>
</feature>
<feature type="modified residue" description="Phosphoserine" evidence="3">
    <location>
        <position position="450"/>
    </location>
</feature>
<feature type="modified residue" description="Phosphoserine" evidence="3">
    <location>
        <position position="554"/>
    </location>
</feature>
<feature type="modified residue" description="Phosphoserine" evidence="3">
    <location>
        <position position="660"/>
    </location>
</feature>
<feature type="modified residue" description="Phosphoserine" evidence="3">
    <location>
        <position position="694"/>
    </location>
</feature>
<feature type="modified residue" description="Phosphoserine" evidence="3">
    <location>
        <position position="697"/>
    </location>
</feature>
<feature type="cross-link" description="Glycyl lysine isopeptide (Lys-Gly) (interchain with G-Cter in SUMO2)" evidence="3">
    <location>
        <position position="109"/>
    </location>
</feature>
<feature type="cross-link" description="Glycyl lysine isopeptide (Lys-Gly) (interchain with G-Cter in SUMO2)" evidence="3">
    <location>
        <position position="121"/>
    </location>
</feature>
<feature type="cross-link" description="Glycyl lysine isopeptide (Lys-Gly) (interchain with G-Cter in SUMO2)" evidence="3">
    <location>
        <position position="137"/>
    </location>
</feature>
<feature type="cross-link" description="Glycyl lysine isopeptide (Lys-Gly) (interchain with G-Cter in SUMO2)" evidence="3">
    <location>
        <position position="155"/>
    </location>
</feature>
<feature type="cross-link" description="Glycyl lysine isopeptide (Lys-Gly) (interchain with G-Cter in SUMO1); alternate" evidence="3">
    <location>
        <position position="157"/>
    </location>
</feature>
<feature type="cross-link" description="Glycyl lysine isopeptide (Lys-Gly) (interchain with G-Cter in SUMO2); alternate" evidence="3">
    <location>
        <position position="157"/>
    </location>
</feature>
<feature type="cross-link" description="Glycyl lysine isopeptide (Lys-Gly) (interchain with G-Cter in SUMO2)" evidence="3">
    <location>
        <position position="228"/>
    </location>
</feature>
<feature type="cross-link" description="Glycyl lysine isopeptide (Lys-Gly) (interchain with G-Cter in SUMO2)" evidence="3">
    <location>
        <position position="280"/>
    </location>
</feature>
<feature type="cross-link" description="Glycyl lysine isopeptide (Lys-Gly) (interchain with G-Cter in SUMO2)" evidence="3">
    <location>
        <position position="304"/>
    </location>
</feature>
<feature type="cross-link" description="Glycyl lysine isopeptide (Lys-Gly) (interchain with G-Cter in SUMO2)" evidence="3">
    <location>
        <position position="311"/>
    </location>
</feature>
<feature type="cross-link" description="Glycyl lysine isopeptide (Lys-Gly) (interchain with G-Cter in SUMO2)" evidence="3">
    <location>
        <position position="359"/>
    </location>
</feature>
<feature type="cross-link" description="Glycyl lysine isopeptide (Lys-Gly) (interchain with G-Cter in SUMO2)" evidence="3">
    <location>
        <position position="365"/>
    </location>
</feature>
<feature type="cross-link" description="Glycyl lysine isopeptide (Lys-Gly) (interchain with G-Cter in SUMO2)" evidence="3">
    <location>
        <position position="530"/>
    </location>
</feature>
<feature type="cross-link" description="Glycyl lysine isopeptide (Lys-Gly) (interchain with G-Cter in SUMO2)" evidence="3">
    <location>
        <position position="538"/>
    </location>
</feature>
<feature type="cross-link" description="Glycyl lysine isopeptide (Lys-Gly) (interchain with G-Cter in SUMO2)" evidence="3">
    <location>
        <position position="555"/>
    </location>
</feature>
<dbReference type="EMBL" id="CR860732">
    <property type="protein sequence ID" value="CAH92846.1"/>
    <property type="molecule type" value="mRNA"/>
</dbReference>
<dbReference type="RefSeq" id="NP_001126662.1">
    <property type="nucleotide sequence ID" value="NM_001133190.1"/>
</dbReference>
<dbReference type="SMR" id="Q5R5X0"/>
<dbReference type="FunCoup" id="Q5R5X0">
    <property type="interactions" value="2486"/>
</dbReference>
<dbReference type="STRING" id="9601.ENSPPYP00000006552"/>
<dbReference type="GeneID" id="100443066"/>
<dbReference type="KEGG" id="pon:100443066"/>
<dbReference type="CTD" id="5411"/>
<dbReference type="eggNOG" id="KOG3756">
    <property type="taxonomic scope" value="Eukaryota"/>
</dbReference>
<dbReference type="InParanoid" id="Q5R5X0"/>
<dbReference type="OrthoDB" id="330772at2759"/>
<dbReference type="Proteomes" id="UP000001595">
    <property type="component" value="Unplaced"/>
</dbReference>
<dbReference type="GO" id="GO:0071013">
    <property type="term" value="C:catalytic step 2 spliceosome"/>
    <property type="evidence" value="ECO:0007669"/>
    <property type="project" value="TreeGrafter"/>
</dbReference>
<dbReference type="GO" id="GO:0030057">
    <property type="term" value="C:desmosome"/>
    <property type="evidence" value="ECO:0007669"/>
    <property type="project" value="UniProtKB-SubCell"/>
</dbReference>
<dbReference type="GO" id="GO:0016607">
    <property type="term" value="C:nuclear speck"/>
    <property type="evidence" value="ECO:0007669"/>
    <property type="project" value="UniProtKB-SubCell"/>
</dbReference>
<dbReference type="GO" id="GO:0003677">
    <property type="term" value="F:DNA binding"/>
    <property type="evidence" value="ECO:0007669"/>
    <property type="project" value="UniProtKB-KW"/>
</dbReference>
<dbReference type="GO" id="GO:0006397">
    <property type="term" value="P:mRNA processing"/>
    <property type="evidence" value="ECO:0007669"/>
    <property type="project" value="UniProtKB-KW"/>
</dbReference>
<dbReference type="GO" id="GO:0008380">
    <property type="term" value="P:RNA splicing"/>
    <property type="evidence" value="ECO:0007669"/>
    <property type="project" value="UniProtKB-KW"/>
</dbReference>
<dbReference type="InterPro" id="IPR039853">
    <property type="entry name" value="Pinin"/>
</dbReference>
<dbReference type="InterPro" id="IPR006786">
    <property type="entry name" value="Pinin_SDK_MemA"/>
</dbReference>
<dbReference type="InterPro" id="IPR006787">
    <property type="entry name" value="Pinin_SDK_N"/>
</dbReference>
<dbReference type="PANTHER" id="PTHR12707:SF0">
    <property type="entry name" value="PININ"/>
    <property type="match status" value="1"/>
</dbReference>
<dbReference type="PANTHER" id="PTHR12707">
    <property type="entry name" value="PINN"/>
    <property type="match status" value="1"/>
</dbReference>
<dbReference type="Pfam" id="PF04696">
    <property type="entry name" value="Pinin_SDK_memA"/>
    <property type="match status" value="1"/>
</dbReference>
<dbReference type="Pfam" id="PF04697">
    <property type="entry name" value="Pinin_SDK_N"/>
    <property type="match status" value="1"/>
</dbReference>
<reference key="1">
    <citation type="submission" date="2004-11" db="EMBL/GenBank/DDBJ databases">
        <authorList>
            <consortium name="The German cDNA consortium"/>
        </authorList>
    </citation>
    <scope>NUCLEOTIDE SEQUENCE [LARGE SCALE MRNA]</scope>
    <source>
        <tissue>Brain cortex</tissue>
    </source>
</reference>
<keyword id="KW-0007">Acetylation</keyword>
<keyword id="KW-0010">Activator</keyword>
<keyword id="KW-0965">Cell junction</keyword>
<keyword id="KW-0175">Coiled coil</keyword>
<keyword id="KW-0238">DNA-binding</keyword>
<keyword id="KW-1017">Isopeptide bond</keyword>
<keyword id="KW-0488">Methylation</keyword>
<keyword id="KW-0507">mRNA processing</keyword>
<keyword id="KW-0508">mRNA splicing</keyword>
<keyword id="KW-0539">Nucleus</keyword>
<keyword id="KW-0597">Phosphoprotein</keyword>
<keyword id="KW-1185">Reference proteome</keyword>
<keyword id="KW-0747">Spliceosome</keyword>
<keyword id="KW-0804">Transcription</keyword>
<keyword id="KW-0805">Transcription regulation</keyword>
<keyword id="KW-0832">Ubl conjugation</keyword>
<organism>
    <name type="scientific">Pongo abelii</name>
    <name type="common">Sumatran orangutan</name>
    <name type="synonym">Pongo pygmaeus abelii</name>
    <dbReference type="NCBI Taxonomy" id="9601"/>
    <lineage>
        <taxon>Eukaryota</taxon>
        <taxon>Metazoa</taxon>
        <taxon>Chordata</taxon>
        <taxon>Craniata</taxon>
        <taxon>Vertebrata</taxon>
        <taxon>Euteleostomi</taxon>
        <taxon>Mammalia</taxon>
        <taxon>Eutheria</taxon>
        <taxon>Euarchontoglires</taxon>
        <taxon>Primates</taxon>
        <taxon>Haplorrhini</taxon>
        <taxon>Catarrhini</taxon>
        <taxon>Hominidae</taxon>
        <taxon>Pongo</taxon>
    </lineage>
</organism>
<gene>
    <name type="primary">PNN</name>
</gene>
<protein>
    <recommendedName>
        <fullName>Pinin</fullName>
    </recommendedName>
</protein>
<name>PININ_PONAB</name>